<comment type="function">
    <text evidence="1">One of the components of the core complex of photosystem II (PSII). It binds chlorophyll and helps catalyze the primary light-induced photochemical processes of PSII. PSII is a light-driven water:plastoquinone oxidoreductase, using light energy to abstract electrons from H(2)O, generating O(2) and a proton gradient subsequently used for ATP formation.</text>
</comment>
<comment type="cofactor">
    <text evidence="1">Binds multiple chlorophylls. PSII binds additional chlorophylls, carotenoids and specific lipids.</text>
</comment>
<comment type="subunit">
    <text evidence="1">PSII is composed of 1 copy each of membrane proteins PsbA, PsbB, PsbC, PsbD, PsbE, PsbF, PsbH, PsbI, PsbJ, PsbK, PsbL, PsbM, PsbT, PsbX, PsbY, PsbZ, Psb30/Ycf12, at least 3 peripheral proteins of the oxygen-evolving complex and a large number of cofactors. It forms dimeric complexes.</text>
</comment>
<comment type="subcellular location">
    <subcellularLocation>
        <location evidence="1">Plastid</location>
        <location evidence="1">Chloroplast thylakoid membrane</location>
        <topology evidence="1">Multi-pass membrane protein</topology>
    </subcellularLocation>
</comment>
<comment type="similarity">
    <text evidence="1">Belongs to the PsbB/PsbC family. PsbB subfamily.</text>
</comment>
<sequence>MGLPWYRVHTVVLNDPGRLIAVHIMHTALVAGWAGSMALYELAVFDPSDPVLDPMWRQGMFVIPFMTRLGITDSWGGWSITGGTVTNPGIWSYEGVAGAHIVFSGLCFLAAIWHWVYWDLAIFVDDRTGKRSLDLPKIFGIHLFLSGVACFGFGTFHVTGLYGPGIWVSDPYGLTGKVQSVNPAWGVEGFDPFVPGGIASHHIAAGTLGILAGLFHLSVRPPQRLYKGLRMGNIETVLSSSIAAVFFAAFVVAGTMWYGSATTPIELFGPTRYQWDQGYFQQEIYRRVSAGLAENQSLSEAWSKIPEKLAFYDYIGNNPAKGGLFRAGSMDNGDGIAVGWLGHPIFRDKEGRELFVRRMPTFFETFPVVLVDGDGIVRADVPFRRAESKYSVEQVGVTVEFYGGELNGVSYSDPATVKKYARRAQLGEIFELDRATLKSDGVFRSSPRGWFTFGHASFALLFFFGHIWHGARTLFRDVFAGIDPDLDAQVEFGVFQKLGDPTTRRQVV</sequence>
<protein>
    <recommendedName>
        <fullName evidence="1">Photosystem II CP47 reaction center protein</fullName>
    </recommendedName>
    <alternativeName>
        <fullName evidence="1">PSII 47 kDa protein</fullName>
    </alternativeName>
    <alternativeName>
        <fullName evidence="1">Protein CP-47</fullName>
    </alternativeName>
</protein>
<evidence type="ECO:0000255" key="1">
    <source>
        <dbReference type="HAMAP-Rule" id="MF_01495"/>
    </source>
</evidence>
<keyword id="KW-0148">Chlorophyll</keyword>
<keyword id="KW-0150">Chloroplast</keyword>
<keyword id="KW-0157">Chromophore</keyword>
<keyword id="KW-0472">Membrane</keyword>
<keyword id="KW-0602">Photosynthesis</keyword>
<keyword id="KW-0604">Photosystem II</keyword>
<keyword id="KW-0934">Plastid</keyword>
<keyword id="KW-0793">Thylakoid</keyword>
<keyword id="KW-0812">Transmembrane</keyword>
<keyword id="KW-1133">Transmembrane helix</keyword>
<reference key="1">
    <citation type="journal article" date="2006" name="BMC Plant Biol.">
        <title>The complete chloroplast genome sequence of Citrus sinensis (L.) Osbeck var 'Ridge Pineapple': organization and phylogenetic relationships to other angiosperms.</title>
        <authorList>
            <person name="Bausher M.G."/>
            <person name="Singh N.D."/>
            <person name="Lee S.-B."/>
            <person name="Jansen R.K."/>
            <person name="Daniell H."/>
        </authorList>
    </citation>
    <scope>NUCLEOTIDE SEQUENCE [LARGE SCALE GENOMIC DNA]</scope>
    <source>
        <strain>cv. Osbeck var. Ridge Pineapple</strain>
    </source>
</reference>
<dbReference type="EMBL" id="DQ864733">
    <property type="protein sequence ID" value="ABI49045.1"/>
    <property type="molecule type" value="Genomic_DNA"/>
</dbReference>
<dbReference type="RefSeq" id="YP_740502.1">
    <property type="nucleotide sequence ID" value="NC_008334.1"/>
</dbReference>
<dbReference type="SMR" id="Q09MF1"/>
<dbReference type="GeneID" id="4271125"/>
<dbReference type="KEGG" id="cit:4271125"/>
<dbReference type="OrthoDB" id="889023at71240"/>
<dbReference type="GO" id="GO:0009535">
    <property type="term" value="C:chloroplast thylakoid membrane"/>
    <property type="evidence" value="ECO:0007669"/>
    <property type="project" value="UniProtKB-SubCell"/>
</dbReference>
<dbReference type="GO" id="GO:0009523">
    <property type="term" value="C:photosystem II"/>
    <property type="evidence" value="ECO:0007669"/>
    <property type="project" value="UniProtKB-KW"/>
</dbReference>
<dbReference type="GO" id="GO:0016168">
    <property type="term" value="F:chlorophyll binding"/>
    <property type="evidence" value="ECO:0007669"/>
    <property type="project" value="UniProtKB-UniRule"/>
</dbReference>
<dbReference type="GO" id="GO:0045156">
    <property type="term" value="F:electron transporter, transferring electrons within the cyclic electron transport pathway of photosynthesis activity"/>
    <property type="evidence" value="ECO:0007669"/>
    <property type="project" value="InterPro"/>
</dbReference>
<dbReference type="GO" id="GO:0009772">
    <property type="term" value="P:photosynthetic electron transport in photosystem II"/>
    <property type="evidence" value="ECO:0007669"/>
    <property type="project" value="InterPro"/>
</dbReference>
<dbReference type="FunFam" id="3.10.680.10:FF:000001">
    <property type="entry name" value="Photosystem II CP47 reaction center protein"/>
    <property type="match status" value="1"/>
</dbReference>
<dbReference type="Gene3D" id="3.10.680.10">
    <property type="entry name" value="Photosystem II CP47 reaction center protein"/>
    <property type="match status" value="1"/>
</dbReference>
<dbReference type="HAMAP" id="MF_01495">
    <property type="entry name" value="PSII_PsbB_CP47"/>
    <property type="match status" value="1"/>
</dbReference>
<dbReference type="InterPro" id="IPR000932">
    <property type="entry name" value="PS_antenna-like"/>
</dbReference>
<dbReference type="InterPro" id="IPR036001">
    <property type="entry name" value="PS_II_antenna-like_sf"/>
</dbReference>
<dbReference type="InterPro" id="IPR017486">
    <property type="entry name" value="PSII_PsbB"/>
</dbReference>
<dbReference type="NCBIfam" id="TIGR03039">
    <property type="entry name" value="PS_II_CP47"/>
    <property type="match status" value="1"/>
</dbReference>
<dbReference type="PANTHER" id="PTHR33180">
    <property type="entry name" value="PHOTOSYSTEM II CP43 REACTION CENTER PROTEIN"/>
    <property type="match status" value="1"/>
</dbReference>
<dbReference type="PANTHER" id="PTHR33180:SF35">
    <property type="entry name" value="PHOTOSYSTEM II CP47 REACTION CENTER PROTEIN"/>
    <property type="match status" value="1"/>
</dbReference>
<dbReference type="Pfam" id="PF00421">
    <property type="entry name" value="PSII"/>
    <property type="match status" value="1"/>
</dbReference>
<dbReference type="SUPFAM" id="SSF161077">
    <property type="entry name" value="Photosystem II antenna protein-like"/>
    <property type="match status" value="1"/>
</dbReference>
<proteinExistence type="inferred from homology"/>
<organism>
    <name type="scientific">Citrus sinensis</name>
    <name type="common">Sweet orange</name>
    <name type="synonym">Citrus aurantium var. sinensis</name>
    <dbReference type="NCBI Taxonomy" id="2711"/>
    <lineage>
        <taxon>Eukaryota</taxon>
        <taxon>Viridiplantae</taxon>
        <taxon>Streptophyta</taxon>
        <taxon>Embryophyta</taxon>
        <taxon>Tracheophyta</taxon>
        <taxon>Spermatophyta</taxon>
        <taxon>Magnoliopsida</taxon>
        <taxon>eudicotyledons</taxon>
        <taxon>Gunneridae</taxon>
        <taxon>Pentapetalae</taxon>
        <taxon>rosids</taxon>
        <taxon>malvids</taxon>
        <taxon>Sapindales</taxon>
        <taxon>Rutaceae</taxon>
        <taxon>Aurantioideae</taxon>
        <taxon>Citrus</taxon>
    </lineage>
</organism>
<accession>Q09MF1</accession>
<gene>
    <name evidence="1" type="primary">psbB</name>
</gene>
<feature type="chain" id="PRO_0000359810" description="Photosystem II CP47 reaction center protein">
    <location>
        <begin position="1"/>
        <end position="508"/>
    </location>
</feature>
<feature type="transmembrane region" description="Helical" evidence="1">
    <location>
        <begin position="21"/>
        <end position="36"/>
    </location>
</feature>
<feature type="transmembrane region" description="Helical" evidence="1">
    <location>
        <begin position="101"/>
        <end position="115"/>
    </location>
</feature>
<feature type="transmembrane region" description="Helical" evidence="1">
    <location>
        <begin position="140"/>
        <end position="156"/>
    </location>
</feature>
<feature type="transmembrane region" description="Helical" evidence="1">
    <location>
        <begin position="203"/>
        <end position="218"/>
    </location>
</feature>
<feature type="transmembrane region" description="Helical" evidence="1">
    <location>
        <begin position="237"/>
        <end position="252"/>
    </location>
</feature>
<feature type="transmembrane region" description="Helical" evidence="1">
    <location>
        <begin position="457"/>
        <end position="472"/>
    </location>
</feature>
<name>PSBB_CITSI</name>
<geneLocation type="chloroplast"/>